<accession>Q9CB43</accession>
<sequence>MLVLQLAVLVTAVYAFVHAALQRPDAYTAAEKLTKPVWLVILGAAVSLTSILGFVFGVLGIVIAACAAGVYLVDVRPKLLDIQGKSR</sequence>
<protein>
    <recommendedName>
        <fullName>Uncharacterized protein ML2453</fullName>
    </recommendedName>
</protein>
<keyword id="KW-0472">Membrane</keyword>
<keyword id="KW-1185">Reference proteome</keyword>
<keyword id="KW-0732">Signal</keyword>
<keyword id="KW-0812">Transmembrane</keyword>
<keyword id="KW-1133">Transmembrane helix</keyword>
<feature type="signal peptide" evidence="1">
    <location>
        <begin position="1"/>
        <end position="19"/>
    </location>
</feature>
<feature type="chain" id="PRO_0000014073" description="Uncharacterized protein ML2453">
    <location>
        <begin position="20"/>
        <end position="87"/>
    </location>
</feature>
<feature type="transmembrane region" description="Helical" evidence="1">
    <location>
        <begin position="51"/>
        <end position="71"/>
    </location>
</feature>
<dbReference type="EMBL" id="AL583925">
    <property type="protein sequence ID" value="CAC31970.1"/>
    <property type="status" value="ALT_INIT"/>
    <property type="molecule type" value="Genomic_DNA"/>
</dbReference>
<dbReference type="PIR" id="B87216">
    <property type="entry name" value="B87216"/>
</dbReference>
<dbReference type="RefSeq" id="WP_010908910.1">
    <property type="nucleotide sequence ID" value="NC_002677.1"/>
</dbReference>
<dbReference type="STRING" id="272631.gene:17576316"/>
<dbReference type="KEGG" id="mle:ML2453"/>
<dbReference type="Leproma" id="ML2453"/>
<dbReference type="eggNOG" id="ENOG5033BDI">
    <property type="taxonomic scope" value="Bacteria"/>
</dbReference>
<dbReference type="HOGENOM" id="CLU_135072_2_1_11"/>
<dbReference type="Proteomes" id="UP000000806">
    <property type="component" value="Chromosome"/>
</dbReference>
<dbReference type="GO" id="GO:0016020">
    <property type="term" value="C:membrane"/>
    <property type="evidence" value="ECO:0007669"/>
    <property type="project" value="UniProtKB-SubCell"/>
</dbReference>
<dbReference type="InterPro" id="IPR019662">
    <property type="entry name" value="DUF2516"/>
</dbReference>
<dbReference type="Pfam" id="PF10724">
    <property type="entry name" value="DUF2516"/>
    <property type="match status" value="1"/>
</dbReference>
<proteinExistence type="inferred from homology"/>
<gene>
    <name type="ordered locus">ML2453</name>
</gene>
<comment type="subcellular location">
    <subcellularLocation>
        <location evidence="2">Membrane</location>
        <topology evidence="2">Single-pass membrane protein</topology>
    </subcellularLocation>
</comment>
<comment type="similarity">
    <text evidence="2">To M.tuberculosis Rv0476.</text>
</comment>
<comment type="sequence caution" evidence="2">
    <conflict type="erroneous initiation">
        <sequence resource="EMBL-CDS" id="CAC31970"/>
    </conflict>
</comment>
<organism>
    <name type="scientific">Mycobacterium leprae (strain TN)</name>
    <dbReference type="NCBI Taxonomy" id="272631"/>
    <lineage>
        <taxon>Bacteria</taxon>
        <taxon>Bacillati</taxon>
        <taxon>Actinomycetota</taxon>
        <taxon>Actinomycetes</taxon>
        <taxon>Mycobacteriales</taxon>
        <taxon>Mycobacteriaceae</taxon>
        <taxon>Mycobacterium</taxon>
    </lineage>
</organism>
<reference key="1">
    <citation type="journal article" date="2001" name="Nature">
        <title>Massive gene decay in the leprosy bacillus.</title>
        <authorList>
            <person name="Cole S.T."/>
            <person name="Eiglmeier K."/>
            <person name="Parkhill J."/>
            <person name="James K.D."/>
            <person name="Thomson N.R."/>
            <person name="Wheeler P.R."/>
            <person name="Honore N."/>
            <person name="Garnier T."/>
            <person name="Churcher C.M."/>
            <person name="Harris D.E."/>
            <person name="Mungall K.L."/>
            <person name="Basham D."/>
            <person name="Brown D."/>
            <person name="Chillingworth T."/>
            <person name="Connor R."/>
            <person name="Davies R.M."/>
            <person name="Devlin K."/>
            <person name="Duthoy S."/>
            <person name="Feltwell T."/>
            <person name="Fraser A."/>
            <person name="Hamlin N."/>
            <person name="Holroyd S."/>
            <person name="Hornsby T."/>
            <person name="Jagels K."/>
            <person name="Lacroix C."/>
            <person name="Maclean J."/>
            <person name="Moule S."/>
            <person name="Murphy L.D."/>
            <person name="Oliver K."/>
            <person name="Quail M.A."/>
            <person name="Rajandream M.A."/>
            <person name="Rutherford K.M."/>
            <person name="Rutter S."/>
            <person name="Seeger K."/>
            <person name="Simon S."/>
            <person name="Simmonds M."/>
            <person name="Skelton J."/>
            <person name="Squares R."/>
            <person name="Squares S."/>
            <person name="Stevens K."/>
            <person name="Taylor K."/>
            <person name="Whitehead S."/>
            <person name="Woodward J.R."/>
            <person name="Barrell B.G."/>
        </authorList>
    </citation>
    <scope>NUCLEOTIDE SEQUENCE [LARGE SCALE GENOMIC DNA]</scope>
    <source>
        <strain>TN</strain>
    </source>
</reference>
<evidence type="ECO:0000255" key="1"/>
<evidence type="ECO:0000305" key="2"/>
<name>Y2453_MYCLE</name>